<sequence length="347" mass="38134">MAEQPVDLSDQALADAVSAVRRAFDGASTLEDLAKAKTEYLGDRSPIALARQALGSLPKTERADAGKRVNVARTEAQTAYDERLAVLRAERDAAVLVAERIDVTLPSTRQPVGARHPITILAERVADTFVAMGWELAEGPEVETEQFNFDALNFPPDHPARSEQDTFQVAPDGSRQVLRTHTSPVQIRALLERELPVYIVSIGRTFRTDELDATHTPVFHQVEGLAVDKGLTMANLRGTLDAFARSEFGPQGRTRFRPHFFPFTEPSAEVDIWFPDKKGGPGWVEWGGCGMVNPNVLRACGIDPEVYSGFAFGMGLERTLQFRNGIPDMRDMVEGDVRFSLPFGVGA</sequence>
<evidence type="ECO:0000255" key="1">
    <source>
        <dbReference type="HAMAP-Rule" id="MF_00281"/>
    </source>
</evidence>
<name>SYFA_MYCGI</name>
<feature type="chain" id="PRO_1000078844" description="Phenylalanine--tRNA ligase alpha subunit">
    <location>
        <begin position="1"/>
        <end position="347"/>
    </location>
</feature>
<feature type="binding site" evidence="1">
    <location>
        <position position="265"/>
    </location>
    <ligand>
        <name>Mg(2+)</name>
        <dbReference type="ChEBI" id="CHEBI:18420"/>
        <note>shared with beta subunit</note>
    </ligand>
</feature>
<reference key="1">
    <citation type="submission" date="2007-04" db="EMBL/GenBank/DDBJ databases">
        <title>Complete sequence of chromosome of Mycobacterium gilvum PYR-GCK.</title>
        <authorList>
            <consortium name="US DOE Joint Genome Institute"/>
            <person name="Copeland A."/>
            <person name="Lucas S."/>
            <person name="Lapidus A."/>
            <person name="Barry K."/>
            <person name="Detter J.C."/>
            <person name="Glavina del Rio T."/>
            <person name="Hammon N."/>
            <person name="Israni S."/>
            <person name="Dalin E."/>
            <person name="Tice H."/>
            <person name="Pitluck S."/>
            <person name="Chain P."/>
            <person name="Malfatti S."/>
            <person name="Shin M."/>
            <person name="Vergez L."/>
            <person name="Schmutz J."/>
            <person name="Larimer F."/>
            <person name="Land M."/>
            <person name="Hauser L."/>
            <person name="Kyrpides N."/>
            <person name="Mikhailova N."/>
            <person name="Miller C."/>
            <person name="Richardson P."/>
        </authorList>
    </citation>
    <scope>NUCLEOTIDE SEQUENCE [LARGE SCALE GENOMIC DNA]</scope>
    <source>
        <strain>PYR-GCK</strain>
    </source>
</reference>
<proteinExistence type="inferred from homology"/>
<organism>
    <name type="scientific">Mycolicibacterium gilvum (strain PYR-GCK)</name>
    <name type="common">Mycobacterium gilvum (strain PYR-GCK)</name>
    <dbReference type="NCBI Taxonomy" id="350054"/>
    <lineage>
        <taxon>Bacteria</taxon>
        <taxon>Bacillati</taxon>
        <taxon>Actinomycetota</taxon>
        <taxon>Actinomycetes</taxon>
        <taxon>Mycobacteriales</taxon>
        <taxon>Mycobacteriaceae</taxon>
        <taxon>Mycolicibacterium</taxon>
    </lineage>
</organism>
<gene>
    <name evidence="1" type="primary">pheS</name>
    <name type="ordered locus">Mflv_3533</name>
</gene>
<protein>
    <recommendedName>
        <fullName evidence="1">Phenylalanine--tRNA ligase alpha subunit</fullName>
        <ecNumber evidence="1">6.1.1.20</ecNumber>
    </recommendedName>
    <alternativeName>
        <fullName evidence="1">Phenylalanyl-tRNA synthetase alpha subunit</fullName>
        <shortName evidence="1">PheRS</shortName>
    </alternativeName>
</protein>
<dbReference type="EC" id="6.1.1.20" evidence="1"/>
<dbReference type="EMBL" id="CP000656">
    <property type="protein sequence ID" value="ABP46007.1"/>
    <property type="molecule type" value="Genomic_DNA"/>
</dbReference>
<dbReference type="SMR" id="A4T9V2"/>
<dbReference type="STRING" id="350054.Mflv_3533"/>
<dbReference type="KEGG" id="mgi:Mflv_3533"/>
<dbReference type="eggNOG" id="COG0016">
    <property type="taxonomic scope" value="Bacteria"/>
</dbReference>
<dbReference type="HOGENOM" id="CLU_025086_0_0_11"/>
<dbReference type="OrthoDB" id="9800719at2"/>
<dbReference type="GO" id="GO:0005737">
    <property type="term" value="C:cytoplasm"/>
    <property type="evidence" value="ECO:0007669"/>
    <property type="project" value="UniProtKB-SubCell"/>
</dbReference>
<dbReference type="GO" id="GO:0005524">
    <property type="term" value="F:ATP binding"/>
    <property type="evidence" value="ECO:0007669"/>
    <property type="project" value="UniProtKB-UniRule"/>
</dbReference>
<dbReference type="GO" id="GO:0000287">
    <property type="term" value="F:magnesium ion binding"/>
    <property type="evidence" value="ECO:0007669"/>
    <property type="project" value="UniProtKB-UniRule"/>
</dbReference>
<dbReference type="GO" id="GO:0004826">
    <property type="term" value="F:phenylalanine-tRNA ligase activity"/>
    <property type="evidence" value="ECO:0007669"/>
    <property type="project" value="UniProtKB-UniRule"/>
</dbReference>
<dbReference type="GO" id="GO:0000049">
    <property type="term" value="F:tRNA binding"/>
    <property type="evidence" value="ECO:0007669"/>
    <property type="project" value="InterPro"/>
</dbReference>
<dbReference type="GO" id="GO:0006432">
    <property type="term" value="P:phenylalanyl-tRNA aminoacylation"/>
    <property type="evidence" value="ECO:0007669"/>
    <property type="project" value="UniProtKB-UniRule"/>
</dbReference>
<dbReference type="CDD" id="cd00496">
    <property type="entry name" value="PheRS_alpha_core"/>
    <property type="match status" value="1"/>
</dbReference>
<dbReference type="Gene3D" id="3.30.930.10">
    <property type="entry name" value="Bira Bifunctional Protein, Domain 2"/>
    <property type="match status" value="1"/>
</dbReference>
<dbReference type="HAMAP" id="MF_00281">
    <property type="entry name" value="Phe_tRNA_synth_alpha1"/>
    <property type="match status" value="1"/>
</dbReference>
<dbReference type="InterPro" id="IPR006195">
    <property type="entry name" value="aa-tRNA-synth_II"/>
</dbReference>
<dbReference type="InterPro" id="IPR045864">
    <property type="entry name" value="aa-tRNA-synth_II/BPL/LPL"/>
</dbReference>
<dbReference type="InterPro" id="IPR004529">
    <property type="entry name" value="Phe-tRNA-synth_IIc_asu"/>
</dbReference>
<dbReference type="InterPro" id="IPR004188">
    <property type="entry name" value="Phe-tRNA_ligase_II_N"/>
</dbReference>
<dbReference type="InterPro" id="IPR022911">
    <property type="entry name" value="Phe_tRNA_ligase_alpha1_bac"/>
</dbReference>
<dbReference type="InterPro" id="IPR002319">
    <property type="entry name" value="Phenylalanyl-tRNA_Synthase"/>
</dbReference>
<dbReference type="InterPro" id="IPR010978">
    <property type="entry name" value="tRNA-bd_arm"/>
</dbReference>
<dbReference type="NCBIfam" id="TIGR00468">
    <property type="entry name" value="pheS"/>
    <property type="match status" value="1"/>
</dbReference>
<dbReference type="PANTHER" id="PTHR11538:SF41">
    <property type="entry name" value="PHENYLALANINE--TRNA LIGASE, MITOCHONDRIAL"/>
    <property type="match status" value="1"/>
</dbReference>
<dbReference type="PANTHER" id="PTHR11538">
    <property type="entry name" value="PHENYLALANYL-TRNA SYNTHETASE"/>
    <property type="match status" value="1"/>
</dbReference>
<dbReference type="Pfam" id="PF02912">
    <property type="entry name" value="Phe_tRNA-synt_N"/>
    <property type="match status" value="1"/>
</dbReference>
<dbReference type="Pfam" id="PF01409">
    <property type="entry name" value="tRNA-synt_2d"/>
    <property type="match status" value="1"/>
</dbReference>
<dbReference type="SUPFAM" id="SSF55681">
    <property type="entry name" value="Class II aaRS and biotin synthetases"/>
    <property type="match status" value="1"/>
</dbReference>
<dbReference type="SUPFAM" id="SSF46589">
    <property type="entry name" value="tRNA-binding arm"/>
    <property type="match status" value="1"/>
</dbReference>
<dbReference type="PROSITE" id="PS50862">
    <property type="entry name" value="AA_TRNA_LIGASE_II"/>
    <property type="match status" value="1"/>
</dbReference>
<keyword id="KW-0030">Aminoacyl-tRNA synthetase</keyword>
<keyword id="KW-0067">ATP-binding</keyword>
<keyword id="KW-0963">Cytoplasm</keyword>
<keyword id="KW-0436">Ligase</keyword>
<keyword id="KW-0460">Magnesium</keyword>
<keyword id="KW-0479">Metal-binding</keyword>
<keyword id="KW-0547">Nucleotide-binding</keyword>
<keyword id="KW-0648">Protein biosynthesis</keyword>
<comment type="catalytic activity">
    <reaction evidence="1">
        <text>tRNA(Phe) + L-phenylalanine + ATP = L-phenylalanyl-tRNA(Phe) + AMP + diphosphate + H(+)</text>
        <dbReference type="Rhea" id="RHEA:19413"/>
        <dbReference type="Rhea" id="RHEA-COMP:9668"/>
        <dbReference type="Rhea" id="RHEA-COMP:9699"/>
        <dbReference type="ChEBI" id="CHEBI:15378"/>
        <dbReference type="ChEBI" id="CHEBI:30616"/>
        <dbReference type="ChEBI" id="CHEBI:33019"/>
        <dbReference type="ChEBI" id="CHEBI:58095"/>
        <dbReference type="ChEBI" id="CHEBI:78442"/>
        <dbReference type="ChEBI" id="CHEBI:78531"/>
        <dbReference type="ChEBI" id="CHEBI:456215"/>
        <dbReference type="EC" id="6.1.1.20"/>
    </reaction>
</comment>
<comment type="cofactor">
    <cofactor evidence="1">
        <name>Mg(2+)</name>
        <dbReference type="ChEBI" id="CHEBI:18420"/>
    </cofactor>
    <text evidence="1">Binds 2 magnesium ions per tetramer.</text>
</comment>
<comment type="subunit">
    <text evidence="1">Tetramer of two alpha and two beta subunits.</text>
</comment>
<comment type="subcellular location">
    <subcellularLocation>
        <location evidence="1">Cytoplasm</location>
    </subcellularLocation>
</comment>
<comment type="similarity">
    <text evidence="1">Belongs to the class-II aminoacyl-tRNA synthetase family. Phe-tRNA synthetase alpha subunit type 1 subfamily.</text>
</comment>
<accession>A4T9V2</accession>